<feature type="chain" id="PRO_1000054933" description="Small ribosomal subunit protein uS17">
    <location>
        <begin position="1"/>
        <end position="83"/>
    </location>
</feature>
<dbReference type="EMBL" id="CP000767">
    <property type="protein sequence ID" value="EAT99603.1"/>
    <property type="molecule type" value="Genomic_DNA"/>
</dbReference>
<dbReference type="RefSeq" id="WP_011992849.1">
    <property type="nucleotide sequence ID" value="NC_009715.2"/>
</dbReference>
<dbReference type="SMR" id="A7H103"/>
<dbReference type="STRING" id="360105.CCV52592_1024"/>
<dbReference type="KEGG" id="ccv:CCV52592_1024"/>
<dbReference type="HOGENOM" id="CLU_073626_1_1_7"/>
<dbReference type="OrthoDB" id="9811714at2"/>
<dbReference type="Proteomes" id="UP000006380">
    <property type="component" value="Chromosome"/>
</dbReference>
<dbReference type="GO" id="GO:0022627">
    <property type="term" value="C:cytosolic small ribosomal subunit"/>
    <property type="evidence" value="ECO:0007669"/>
    <property type="project" value="TreeGrafter"/>
</dbReference>
<dbReference type="GO" id="GO:0019843">
    <property type="term" value="F:rRNA binding"/>
    <property type="evidence" value="ECO:0007669"/>
    <property type="project" value="UniProtKB-UniRule"/>
</dbReference>
<dbReference type="GO" id="GO:0003735">
    <property type="term" value="F:structural constituent of ribosome"/>
    <property type="evidence" value="ECO:0007669"/>
    <property type="project" value="InterPro"/>
</dbReference>
<dbReference type="GO" id="GO:0006412">
    <property type="term" value="P:translation"/>
    <property type="evidence" value="ECO:0007669"/>
    <property type="project" value="UniProtKB-UniRule"/>
</dbReference>
<dbReference type="CDD" id="cd00364">
    <property type="entry name" value="Ribosomal_uS17"/>
    <property type="match status" value="1"/>
</dbReference>
<dbReference type="Gene3D" id="2.40.50.140">
    <property type="entry name" value="Nucleic acid-binding proteins"/>
    <property type="match status" value="1"/>
</dbReference>
<dbReference type="HAMAP" id="MF_01345_B">
    <property type="entry name" value="Ribosomal_uS17_B"/>
    <property type="match status" value="1"/>
</dbReference>
<dbReference type="InterPro" id="IPR012340">
    <property type="entry name" value="NA-bd_OB-fold"/>
</dbReference>
<dbReference type="InterPro" id="IPR000266">
    <property type="entry name" value="Ribosomal_uS17"/>
</dbReference>
<dbReference type="InterPro" id="IPR019984">
    <property type="entry name" value="Ribosomal_uS17_bact/chlr"/>
</dbReference>
<dbReference type="InterPro" id="IPR019979">
    <property type="entry name" value="Ribosomal_uS17_CS"/>
</dbReference>
<dbReference type="NCBIfam" id="NF004123">
    <property type="entry name" value="PRK05610.1"/>
    <property type="match status" value="1"/>
</dbReference>
<dbReference type="NCBIfam" id="TIGR03635">
    <property type="entry name" value="uS17_bact"/>
    <property type="match status" value="1"/>
</dbReference>
<dbReference type="PANTHER" id="PTHR10744">
    <property type="entry name" value="40S RIBOSOMAL PROTEIN S11 FAMILY MEMBER"/>
    <property type="match status" value="1"/>
</dbReference>
<dbReference type="PANTHER" id="PTHR10744:SF1">
    <property type="entry name" value="SMALL RIBOSOMAL SUBUNIT PROTEIN US17M"/>
    <property type="match status" value="1"/>
</dbReference>
<dbReference type="Pfam" id="PF00366">
    <property type="entry name" value="Ribosomal_S17"/>
    <property type="match status" value="1"/>
</dbReference>
<dbReference type="PRINTS" id="PR00973">
    <property type="entry name" value="RIBOSOMALS17"/>
</dbReference>
<dbReference type="SUPFAM" id="SSF50249">
    <property type="entry name" value="Nucleic acid-binding proteins"/>
    <property type="match status" value="1"/>
</dbReference>
<dbReference type="PROSITE" id="PS00056">
    <property type="entry name" value="RIBOSOMAL_S17"/>
    <property type="match status" value="1"/>
</dbReference>
<accession>A7H103</accession>
<organism>
    <name type="scientific">Campylobacter curvus (strain 525.92)</name>
    <dbReference type="NCBI Taxonomy" id="360105"/>
    <lineage>
        <taxon>Bacteria</taxon>
        <taxon>Pseudomonadati</taxon>
        <taxon>Campylobacterota</taxon>
        <taxon>Epsilonproteobacteria</taxon>
        <taxon>Campylobacterales</taxon>
        <taxon>Campylobacteraceae</taxon>
        <taxon>Campylobacter</taxon>
    </lineage>
</organism>
<reference key="1">
    <citation type="submission" date="2007-07" db="EMBL/GenBank/DDBJ databases">
        <title>Genome sequence of Campylobacter curvus 525.92 isolated from human feces.</title>
        <authorList>
            <person name="Fouts D.E."/>
            <person name="Mongodin E.F."/>
            <person name="Puiu D."/>
            <person name="Sebastian Y."/>
            <person name="Miller W.G."/>
            <person name="Mandrell R.E."/>
            <person name="Lastovica A.J."/>
            <person name="Nelson K.E."/>
        </authorList>
    </citation>
    <scope>NUCLEOTIDE SEQUENCE [LARGE SCALE GENOMIC DNA]</scope>
    <source>
        <strain>525.92</strain>
    </source>
</reference>
<evidence type="ECO:0000255" key="1">
    <source>
        <dbReference type="HAMAP-Rule" id="MF_01345"/>
    </source>
</evidence>
<evidence type="ECO:0000305" key="2"/>
<proteinExistence type="inferred from homology"/>
<protein>
    <recommendedName>
        <fullName evidence="1">Small ribosomal subunit protein uS17</fullName>
    </recommendedName>
    <alternativeName>
        <fullName evidence="2">30S ribosomal protein S17</fullName>
    </alternativeName>
</protein>
<keyword id="KW-1185">Reference proteome</keyword>
<keyword id="KW-0687">Ribonucleoprotein</keyword>
<keyword id="KW-0689">Ribosomal protein</keyword>
<keyword id="KW-0694">RNA-binding</keyword>
<keyword id="KW-0699">rRNA-binding</keyword>
<name>RS17_CAMC5</name>
<gene>
    <name evidence="1" type="primary">rpsQ</name>
    <name type="ordered locus">Ccur92_18410</name>
    <name type="ORF">CCV52592_1024</name>
</gene>
<comment type="function">
    <text evidence="1">One of the primary rRNA binding proteins, it binds specifically to the 5'-end of 16S ribosomal RNA.</text>
</comment>
<comment type="subunit">
    <text evidence="1">Part of the 30S ribosomal subunit.</text>
</comment>
<comment type="similarity">
    <text evidence="1">Belongs to the universal ribosomal protein uS17 family.</text>
</comment>
<sequence>MALKREIQGVVLQKAGDKTATILVERRVMHPRYHKFVKRFKKYLVHDEKNETNAGDTIVAVECRPLSARKSFRLKAIVAKGVE</sequence>